<organism>
    <name type="scientific">Bacillus subtilis (strain 168)</name>
    <dbReference type="NCBI Taxonomy" id="224308"/>
    <lineage>
        <taxon>Bacteria</taxon>
        <taxon>Bacillati</taxon>
        <taxon>Bacillota</taxon>
        <taxon>Bacilli</taxon>
        <taxon>Bacillales</taxon>
        <taxon>Bacillaceae</taxon>
        <taxon>Bacillus</taxon>
    </lineage>
</organism>
<accession>P07869</accession>
<reference key="1">
    <citation type="journal article" date="1987" name="Gene">
        <title>The nucleotide sequence and gene organization of the gerA spore germination operon of Bacillus subtilis 168.</title>
        <authorList>
            <person name="Zuberi A.R."/>
            <person name="Moir A."/>
            <person name="Feavers I.M."/>
        </authorList>
    </citation>
    <scope>NUCLEOTIDE SEQUENCE [GENOMIC DNA]</scope>
    <source>
        <strain>168</strain>
    </source>
</reference>
<reference key="2">
    <citation type="submission" date="1996-03" db="EMBL/GenBank/DDBJ databases">
        <authorList>
            <person name="Moir A."/>
        </authorList>
    </citation>
    <scope>SEQUENCE REVISION</scope>
</reference>
<reference key="3">
    <citation type="journal article" date="1998" name="Microbiology">
        <title>The yvsA-yvqA (293 degrees - 289 degrees) region of the Bacillus subtilis chromosome containing genes involved in metal ion uptake and a putative sigma factor.</title>
        <authorList>
            <person name="Wipat A."/>
            <person name="Brignell C.S."/>
            <person name="Guy J.B."/>
            <person name="Rose M."/>
            <person name="Emmerson P.T."/>
            <person name="Harwood C.R."/>
        </authorList>
    </citation>
    <scope>NUCLEOTIDE SEQUENCE [GENOMIC DNA]</scope>
    <source>
        <strain>168</strain>
    </source>
</reference>
<reference key="4">
    <citation type="journal article" date="1997" name="Nature">
        <title>The complete genome sequence of the Gram-positive bacterium Bacillus subtilis.</title>
        <authorList>
            <person name="Kunst F."/>
            <person name="Ogasawara N."/>
            <person name="Moszer I."/>
            <person name="Albertini A.M."/>
            <person name="Alloni G."/>
            <person name="Azevedo V."/>
            <person name="Bertero M.G."/>
            <person name="Bessieres P."/>
            <person name="Bolotin A."/>
            <person name="Borchert S."/>
            <person name="Borriss R."/>
            <person name="Boursier L."/>
            <person name="Brans A."/>
            <person name="Braun M."/>
            <person name="Brignell S.C."/>
            <person name="Bron S."/>
            <person name="Brouillet S."/>
            <person name="Bruschi C.V."/>
            <person name="Caldwell B."/>
            <person name="Capuano V."/>
            <person name="Carter N.M."/>
            <person name="Choi S.-K."/>
            <person name="Codani J.-J."/>
            <person name="Connerton I.F."/>
            <person name="Cummings N.J."/>
            <person name="Daniel R.A."/>
            <person name="Denizot F."/>
            <person name="Devine K.M."/>
            <person name="Duesterhoeft A."/>
            <person name="Ehrlich S.D."/>
            <person name="Emmerson P.T."/>
            <person name="Entian K.-D."/>
            <person name="Errington J."/>
            <person name="Fabret C."/>
            <person name="Ferrari E."/>
            <person name="Foulger D."/>
            <person name="Fritz C."/>
            <person name="Fujita M."/>
            <person name="Fujita Y."/>
            <person name="Fuma S."/>
            <person name="Galizzi A."/>
            <person name="Galleron N."/>
            <person name="Ghim S.-Y."/>
            <person name="Glaser P."/>
            <person name="Goffeau A."/>
            <person name="Golightly E.J."/>
            <person name="Grandi G."/>
            <person name="Guiseppi G."/>
            <person name="Guy B.J."/>
            <person name="Haga K."/>
            <person name="Haiech J."/>
            <person name="Harwood C.R."/>
            <person name="Henaut A."/>
            <person name="Hilbert H."/>
            <person name="Holsappel S."/>
            <person name="Hosono S."/>
            <person name="Hullo M.-F."/>
            <person name="Itaya M."/>
            <person name="Jones L.-M."/>
            <person name="Joris B."/>
            <person name="Karamata D."/>
            <person name="Kasahara Y."/>
            <person name="Klaerr-Blanchard M."/>
            <person name="Klein C."/>
            <person name="Kobayashi Y."/>
            <person name="Koetter P."/>
            <person name="Koningstein G."/>
            <person name="Krogh S."/>
            <person name="Kumano M."/>
            <person name="Kurita K."/>
            <person name="Lapidus A."/>
            <person name="Lardinois S."/>
            <person name="Lauber J."/>
            <person name="Lazarevic V."/>
            <person name="Lee S.-M."/>
            <person name="Levine A."/>
            <person name="Liu H."/>
            <person name="Masuda S."/>
            <person name="Mauel C."/>
            <person name="Medigue C."/>
            <person name="Medina N."/>
            <person name="Mellado R.P."/>
            <person name="Mizuno M."/>
            <person name="Moestl D."/>
            <person name="Nakai S."/>
            <person name="Noback M."/>
            <person name="Noone D."/>
            <person name="O'Reilly M."/>
            <person name="Ogawa K."/>
            <person name="Ogiwara A."/>
            <person name="Oudega B."/>
            <person name="Park S.-H."/>
            <person name="Parro V."/>
            <person name="Pohl T.M."/>
            <person name="Portetelle D."/>
            <person name="Porwollik S."/>
            <person name="Prescott A.M."/>
            <person name="Presecan E."/>
            <person name="Pujic P."/>
            <person name="Purnelle B."/>
            <person name="Rapoport G."/>
            <person name="Rey M."/>
            <person name="Reynolds S."/>
            <person name="Rieger M."/>
            <person name="Rivolta C."/>
            <person name="Rocha E."/>
            <person name="Roche B."/>
            <person name="Rose M."/>
            <person name="Sadaie Y."/>
            <person name="Sato T."/>
            <person name="Scanlan E."/>
            <person name="Schleich S."/>
            <person name="Schroeter R."/>
            <person name="Scoffone F."/>
            <person name="Sekiguchi J."/>
            <person name="Sekowska A."/>
            <person name="Seror S.J."/>
            <person name="Serror P."/>
            <person name="Shin B.-S."/>
            <person name="Soldo B."/>
            <person name="Sorokin A."/>
            <person name="Tacconi E."/>
            <person name="Takagi T."/>
            <person name="Takahashi H."/>
            <person name="Takemaru K."/>
            <person name="Takeuchi M."/>
            <person name="Tamakoshi A."/>
            <person name="Tanaka T."/>
            <person name="Terpstra P."/>
            <person name="Tognoni A."/>
            <person name="Tosato V."/>
            <person name="Uchiyama S."/>
            <person name="Vandenbol M."/>
            <person name="Vannier F."/>
            <person name="Vassarotti A."/>
            <person name="Viari A."/>
            <person name="Wambutt R."/>
            <person name="Wedler E."/>
            <person name="Wedler H."/>
            <person name="Weitzenegger T."/>
            <person name="Winters P."/>
            <person name="Wipat A."/>
            <person name="Yamamoto H."/>
            <person name="Yamane K."/>
            <person name="Yasumoto K."/>
            <person name="Yata K."/>
            <person name="Yoshida K."/>
            <person name="Yoshikawa H.-F."/>
            <person name="Zumstein E."/>
            <person name="Yoshikawa H."/>
            <person name="Danchin A."/>
        </authorList>
    </citation>
    <scope>NUCLEOTIDE SEQUENCE [LARGE SCALE GENOMIC DNA]</scope>
    <source>
        <strain>168</strain>
    </source>
</reference>
<reference key="5">
    <citation type="journal article" date="1993" name="Protein Sci.">
        <title>Mammalian integral membrane receptors are homologous to facilitators and antiporters of yeast, fungi, and eubacteria.</title>
        <authorList>
            <person name="Reizer J."/>
            <person name="Finley K."/>
            <person name="Kakuda D."/>
            <person name="McLeod C.L."/>
            <person name="Reizer A."/>
            <person name="Saier M.H. Jr."/>
        </authorList>
    </citation>
    <scope>SIMILARITY TO OTHER MEMBER OF THE FAMILY</scope>
</reference>
<gene>
    <name type="primary">gerAB</name>
    <name type="synonym">gerA2</name>
    <name type="ordered locus">BSU33060</name>
</gene>
<comment type="function">
    <text>Involved in the germinative response to L-alanine. Could be an amino acid transporter. Forms a complex at the inner spore membrane which acts as a receptor for L-alanine, thus is involved in the stimulation of germination in response to alanine. Can stimulate germination in the absence of gerD and gerK gene products (fructose and glucose receptors, respectively), but the response is improved in their presence.</text>
</comment>
<comment type="subcellular location">
    <subcellularLocation>
        <location>Cell membrane</location>
        <topology>Multi-pass membrane protein</topology>
    </subcellularLocation>
</comment>
<comment type="developmental stage">
    <text>Expressed in the forespore compartment of the developing sporangium.</text>
</comment>
<comment type="similarity">
    <text evidence="2">Belongs to the amino acid-polyamine-organocation (APC) superfamily. Spore germination protein (SGP) (TC 2.A.3.9) family.</text>
</comment>
<name>GERAB_BACSU</name>
<dbReference type="EMBL" id="M16189">
    <property type="protein sequence ID" value="AAA92781.1"/>
    <property type="molecule type" value="Genomic_DNA"/>
</dbReference>
<dbReference type="EMBL" id="AJ223978">
    <property type="protein sequence ID" value="CAA11747.1"/>
    <property type="molecule type" value="Genomic_DNA"/>
</dbReference>
<dbReference type="EMBL" id="AL009126">
    <property type="protein sequence ID" value="CAB15296.1"/>
    <property type="molecule type" value="Genomic_DNA"/>
</dbReference>
<dbReference type="PIR" id="F69629">
    <property type="entry name" value="F69629"/>
</dbReference>
<dbReference type="RefSeq" id="NP_391186.1">
    <property type="nucleotide sequence ID" value="NC_000964.3"/>
</dbReference>
<dbReference type="RefSeq" id="WP_009968145.1">
    <property type="nucleotide sequence ID" value="NZ_OZ025638.1"/>
</dbReference>
<dbReference type="SMR" id="P07869"/>
<dbReference type="FunCoup" id="P07869">
    <property type="interactions" value="44"/>
</dbReference>
<dbReference type="STRING" id="224308.BSU33060"/>
<dbReference type="TCDB" id="2.A.3.9.1">
    <property type="family name" value="the amino acid-polyamine-organocation (apc) family"/>
</dbReference>
<dbReference type="PaxDb" id="224308-BSU33060"/>
<dbReference type="EnsemblBacteria" id="CAB15296">
    <property type="protein sequence ID" value="CAB15296"/>
    <property type="gene ID" value="BSU_33060"/>
</dbReference>
<dbReference type="GeneID" id="935948"/>
<dbReference type="KEGG" id="bsu:BSU33060"/>
<dbReference type="PATRIC" id="fig|224308.179.peg.3584"/>
<dbReference type="eggNOG" id="COG0814">
    <property type="taxonomic scope" value="Bacteria"/>
</dbReference>
<dbReference type="InParanoid" id="P07869"/>
<dbReference type="OrthoDB" id="2716906at2"/>
<dbReference type="PhylomeDB" id="P07869"/>
<dbReference type="BioCyc" id="BSUB:BSU33060-MONOMER"/>
<dbReference type="Proteomes" id="UP000001570">
    <property type="component" value="Chromosome"/>
</dbReference>
<dbReference type="GO" id="GO:0005886">
    <property type="term" value="C:plasma membrane"/>
    <property type="evidence" value="ECO:0007669"/>
    <property type="project" value="UniProtKB-SubCell"/>
</dbReference>
<dbReference type="GO" id="GO:0006865">
    <property type="term" value="P:amino acid transport"/>
    <property type="evidence" value="ECO:0007669"/>
    <property type="project" value="UniProtKB-KW"/>
</dbReference>
<dbReference type="GO" id="GO:0009847">
    <property type="term" value="P:spore germination"/>
    <property type="evidence" value="ECO:0007669"/>
    <property type="project" value="InterPro"/>
</dbReference>
<dbReference type="Gene3D" id="1.20.1740.10">
    <property type="entry name" value="Amino acid/polyamine transporter I"/>
    <property type="match status" value="1"/>
</dbReference>
<dbReference type="InterPro" id="IPR004761">
    <property type="entry name" value="Spore_GerAB"/>
</dbReference>
<dbReference type="NCBIfam" id="TIGR00912">
    <property type="entry name" value="2A0309"/>
    <property type="match status" value="1"/>
</dbReference>
<dbReference type="PANTHER" id="PTHR34975">
    <property type="entry name" value="SPORE GERMINATION PROTEIN A2"/>
    <property type="match status" value="1"/>
</dbReference>
<dbReference type="PANTHER" id="PTHR34975:SF2">
    <property type="entry name" value="SPORE GERMINATION PROTEIN A2"/>
    <property type="match status" value="1"/>
</dbReference>
<dbReference type="Pfam" id="PF03845">
    <property type="entry name" value="Spore_permease"/>
    <property type="match status" value="1"/>
</dbReference>
<protein>
    <recommendedName>
        <fullName>Spore germination protein A2</fullName>
    </recommendedName>
</protein>
<keyword id="KW-0029">Amino-acid transport</keyword>
<keyword id="KW-1003">Cell membrane</keyword>
<keyword id="KW-0309">Germination</keyword>
<keyword id="KW-0472">Membrane</keyword>
<keyword id="KW-1185">Reference proteome</keyword>
<keyword id="KW-0812">Transmembrane</keyword>
<keyword id="KW-1133">Transmembrane helix</keyword>
<keyword id="KW-0813">Transport</keyword>
<evidence type="ECO:0000255" key="1"/>
<evidence type="ECO:0000305" key="2"/>
<feature type="chain" id="PRO_0000054255" description="Spore germination protein A2">
    <location>
        <begin position="1"/>
        <end position="365"/>
    </location>
</feature>
<feature type="transmembrane region" description="Helical" evidence="1">
    <location>
        <begin position="12"/>
        <end position="32"/>
    </location>
</feature>
<feature type="transmembrane region" description="Helical" evidence="1">
    <location>
        <begin position="45"/>
        <end position="65"/>
    </location>
</feature>
<feature type="transmembrane region" description="Helical" evidence="1">
    <location>
        <begin position="85"/>
        <end position="105"/>
    </location>
</feature>
<feature type="transmembrane region" description="Helical" evidence="1">
    <location>
        <begin position="122"/>
        <end position="142"/>
    </location>
</feature>
<feature type="transmembrane region" description="Helical" evidence="1">
    <location>
        <begin position="148"/>
        <end position="168"/>
    </location>
</feature>
<feature type="transmembrane region" description="Helical" evidence="1">
    <location>
        <begin position="187"/>
        <end position="207"/>
    </location>
</feature>
<feature type="transmembrane region" description="Helical" evidence="1">
    <location>
        <begin position="223"/>
        <end position="243"/>
    </location>
</feature>
<feature type="transmembrane region" description="Helical" evidence="1">
    <location>
        <begin position="250"/>
        <end position="270"/>
    </location>
</feature>
<feature type="transmembrane region" description="Helical" evidence="1">
    <location>
        <begin position="275"/>
        <end position="295"/>
    </location>
</feature>
<feature type="transmembrane region" description="Helical" evidence="1">
    <location>
        <begin position="303"/>
        <end position="323"/>
    </location>
</feature>
<feature type="transmembrane region" description="Helical" evidence="1">
    <location>
        <begin position="338"/>
        <end position="358"/>
    </location>
</feature>
<proteinExistence type="evidence at transcript level"/>
<sequence>MSQKQTPLKLNTFQGISIVANTMLGAGLLTLPRALTTKANTPDGWITLILEGFIFIFFIYLNTLIQKKHQYPSLFEYLKEGLGKWIGSIIGLLICGYFLGVASFETRAMAEMVKFFLLERTPIQVIILTFICCGIYLMVGGLSDVSRLFPFYLTVTIIILLIVFGISFKIFDINNLRPVLGEGLGPIANSLTVVSISFLGMEVMLFLPEHMKKKKYTFRYASLGFLIPIILYILTYIIVVGALTAPEVKTLIWPTISLFQSFELKGIFIERFESFLLVVWIIQFFTTFVIYGYFAANGLKKTFGLSTKTSMVIIGITVFYFSLWPDDANQVMMYSDYLGYIFVSLFLLPFILFFIVALKRRITTK</sequence>